<comment type="catalytic activity">
    <reaction>
        <text>Cleavage of hydrophobic, N-terminal signal or leader sequences from secreted and periplasmic proteins.</text>
        <dbReference type="EC" id="3.4.21.89"/>
    </reaction>
</comment>
<comment type="subcellular location">
    <subcellularLocation>
        <location evidence="3">Cell membrane</location>
        <topology evidence="3">Single-pass type II membrane protein</topology>
    </subcellularLocation>
</comment>
<comment type="induction">
    <text>Expressed constitutively.</text>
</comment>
<comment type="miscellaneous">
    <text>B.subtilis contains five chromosomal type I signal peptidases: SipS, SipT, SipU, SipV and SipW. They have different, but overlapping, substrate specificities and have different transcription patterns.</text>
</comment>
<comment type="similarity">
    <text evidence="3">Belongs to the peptidase S26 family.</text>
</comment>
<proteinExistence type="evidence at protein level"/>
<gene>
    <name type="primary">sipU</name>
    <name type="synonym">ycsB</name>
    <name type="ordered locus">BSU04010</name>
</gene>
<feature type="chain" id="PRO_0000109501" description="Signal peptidase I U">
    <location>
        <begin position="1"/>
        <end position="187"/>
    </location>
</feature>
<feature type="topological domain" description="Cytoplasmic" evidence="2">
    <location>
        <begin position="1"/>
        <end position="16"/>
    </location>
</feature>
<feature type="transmembrane region" description="Helical" evidence="2">
    <location>
        <begin position="17"/>
        <end position="37"/>
    </location>
</feature>
<feature type="topological domain" description="Extracellular" evidence="2">
    <location>
        <begin position="38"/>
        <end position="187"/>
    </location>
</feature>
<feature type="active site" evidence="1">
    <location>
        <position position="46"/>
    </location>
</feature>
<feature type="active site" evidence="1">
    <location>
        <position position="88"/>
    </location>
</feature>
<sequence length="187" mass="21183">MNAKTITLKKKRKIKTIVVLSIIMIAALIFTIRLVFYKPFLIEGSSMAPTLKDSERILVDKAVKWTGGFHRGDIIVIHDKKSGRSFVKRLIGLPGDSIKMKNDQLYINDKKVEEPYLKEYKQEVKESGVTLTGDFEVEVPSGKYFVMGDNRLNSLDSRNGMGMPSEDDIIGTESLVFYPFGEMRQAK</sequence>
<name>LEPU_BACSU</name>
<keyword id="KW-1003">Cell membrane</keyword>
<keyword id="KW-0378">Hydrolase</keyword>
<keyword id="KW-0472">Membrane</keyword>
<keyword id="KW-0645">Protease</keyword>
<keyword id="KW-1185">Reference proteome</keyword>
<keyword id="KW-0812">Transmembrane</keyword>
<keyword id="KW-1133">Transmembrane helix</keyword>
<accession>P42959</accession>
<reference key="1">
    <citation type="journal article" date="1995" name="Microbiology">
        <title>Determination of a 17,484 bp nucleotide sequence around the 39 degrees region of the Bacillus subtilis chromosome and similarity analysis of the products of putative ORFs.</title>
        <authorList>
            <person name="Akagawa E."/>
            <person name="Kurita K."/>
            <person name="Sugawara T."/>
            <person name="Nakamura K."/>
            <person name="Kasahara Y."/>
            <person name="Ogasawara N."/>
            <person name="Yamane K."/>
        </authorList>
    </citation>
    <scope>NUCLEOTIDE SEQUENCE [GENOMIC DNA]</scope>
    <source>
        <strain>168</strain>
    </source>
</reference>
<reference key="2">
    <citation type="journal article" date="1996" name="Microbiology">
        <title>The 25 degrees-36 degrees region of the Bacillus subtilis chromosome: determination of the sequence of a 146 kb segment and identification of 113 genes.</title>
        <authorList>
            <person name="Yamane K."/>
            <person name="Kumano M."/>
            <person name="Kurita K."/>
        </authorList>
    </citation>
    <scope>NUCLEOTIDE SEQUENCE [GENOMIC DNA]</scope>
    <source>
        <strain>168</strain>
    </source>
</reference>
<reference key="3">
    <citation type="journal article" date="1997" name="Nature">
        <title>The complete genome sequence of the Gram-positive bacterium Bacillus subtilis.</title>
        <authorList>
            <person name="Kunst F."/>
            <person name="Ogasawara N."/>
            <person name="Moszer I."/>
            <person name="Albertini A.M."/>
            <person name="Alloni G."/>
            <person name="Azevedo V."/>
            <person name="Bertero M.G."/>
            <person name="Bessieres P."/>
            <person name="Bolotin A."/>
            <person name="Borchert S."/>
            <person name="Borriss R."/>
            <person name="Boursier L."/>
            <person name="Brans A."/>
            <person name="Braun M."/>
            <person name="Brignell S.C."/>
            <person name="Bron S."/>
            <person name="Brouillet S."/>
            <person name="Bruschi C.V."/>
            <person name="Caldwell B."/>
            <person name="Capuano V."/>
            <person name="Carter N.M."/>
            <person name="Choi S.-K."/>
            <person name="Codani J.-J."/>
            <person name="Connerton I.F."/>
            <person name="Cummings N.J."/>
            <person name="Daniel R.A."/>
            <person name="Denizot F."/>
            <person name="Devine K.M."/>
            <person name="Duesterhoeft A."/>
            <person name="Ehrlich S.D."/>
            <person name="Emmerson P.T."/>
            <person name="Entian K.-D."/>
            <person name="Errington J."/>
            <person name="Fabret C."/>
            <person name="Ferrari E."/>
            <person name="Foulger D."/>
            <person name="Fritz C."/>
            <person name="Fujita M."/>
            <person name="Fujita Y."/>
            <person name="Fuma S."/>
            <person name="Galizzi A."/>
            <person name="Galleron N."/>
            <person name="Ghim S.-Y."/>
            <person name="Glaser P."/>
            <person name="Goffeau A."/>
            <person name="Golightly E.J."/>
            <person name="Grandi G."/>
            <person name="Guiseppi G."/>
            <person name="Guy B.J."/>
            <person name="Haga K."/>
            <person name="Haiech J."/>
            <person name="Harwood C.R."/>
            <person name="Henaut A."/>
            <person name="Hilbert H."/>
            <person name="Holsappel S."/>
            <person name="Hosono S."/>
            <person name="Hullo M.-F."/>
            <person name="Itaya M."/>
            <person name="Jones L.-M."/>
            <person name="Joris B."/>
            <person name="Karamata D."/>
            <person name="Kasahara Y."/>
            <person name="Klaerr-Blanchard M."/>
            <person name="Klein C."/>
            <person name="Kobayashi Y."/>
            <person name="Koetter P."/>
            <person name="Koningstein G."/>
            <person name="Krogh S."/>
            <person name="Kumano M."/>
            <person name="Kurita K."/>
            <person name="Lapidus A."/>
            <person name="Lardinois S."/>
            <person name="Lauber J."/>
            <person name="Lazarevic V."/>
            <person name="Lee S.-M."/>
            <person name="Levine A."/>
            <person name="Liu H."/>
            <person name="Masuda S."/>
            <person name="Mauel C."/>
            <person name="Medigue C."/>
            <person name="Medina N."/>
            <person name="Mellado R.P."/>
            <person name="Mizuno M."/>
            <person name="Moestl D."/>
            <person name="Nakai S."/>
            <person name="Noback M."/>
            <person name="Noone D."/>
            <person name="O'Reilly M."/>
            <person name="Ogawa K."/>
            <person name="Ogiwara A."/>
            <person name="Oudega B."/>
            <person name="Park S.-H."/>
            <person name="Parro V."/>
            <person name="Pohl T.M."/>
            <person name="Portetelle D."/>
            <person name="Porwollik S."/>
            <person name="Prescott A.M."/>
            <person name="Presecan E."/>
            <person name="Pujic P."/>
            <person name="Purnelle B."/>
            <person name="Rapoport G."/>
            <person name="Rey M."/>
            <person name="Reynolds S."/>
            <person name="Rieger M."/>
            <person name="Rivolta C."/>
            <person name="Rocha E."/>
            <person name="Roche B."/>
            <person name="Rose M."/>
            <person name="Sadaie Y."/>
            <person name="Sato T."/>
            <person name="Scanlan E."/>
            <person name="Schleich S."/>
            <person name="Schroeter R."/>
            <person name="Scoffone F."/>
            <person name="Sekiguchi J."/>
            <person name="Sekowska A."/>
            <person name="Seror S.J."/>
            <person name="Serror P."/>
            <person name="Shin B.-S."/>
            <person name="Soldo B."/>
            <person name="Sorokin A."/>
            <person name="Tacconi E."/>
            <person name="Takagi T."/>
            <person name="Takahashi H."/>
            <person name="Takemaru K."/>
            <person name="Takeuchi M."/>
            <person name="Tamakoshi A."/>
            <person name="Tanaka T."/>
            <person name="Terpstra P."/>
            <person name="Tognoni A."/>
            <person name="Tosato V."/>
            <person name="Uchiyama S."/>
            <person name="Vandenbol M."/>
            <person name="Vannier F."/>
            <person name="Vassarotti A."/>
            <person name="Viari A."/>
            <person name="Wambutt R."/>
            <person name="Wedler E."/>
            <person name="Wedler H."/>
            <person name="Weitzenegger T."/>
            <person name="Winters P."/>
            <person name="Wipat A."/>
            <person name="Yamamoto H."/>
            <person name="Yamane K."/>
            <person name="Yasumoto K."/>
            <person name="Yata K."/>
            <person name="Yoshida K."/>
            <person name="Yoshikawa H.-F."/>
            <person name="Zumstein E."/>
            <person name="Yoshikawa H."/>
            <person name="Danchin A."/>
        </authorList>
    </citation>
    <scope>NUCLEOTIDE SEQUENCE [LARGE SCALE GENOMIC DNA]</scope>
    <source>
        <strain>168</strain>
    </source>
</reference>
<reference key="4">
    <citation type="journal article" date="1998" name="Genes Dev.">
        <title>Functional analysis of the secretory precursor processing machinery of Bacillus subtilis: identification of a eubacterial homolog of archaeal and eukaryotic signal peptidases.</title>
        <authorList>
            <person name="Tjalsma H."/>
            <person name="Bolhuis A."/>
            <person name="van Roosmalen M.L."/>
            <person name="Wiegert T."/>
            <person name="Schumann W."/>
            <person name="Broekhuizen C.P."/>
            <person name="Quax W.J."/>
            <person name="Venema G."/>
            <person name="Bron S."/>
            <person name="van Dijl J.M."/>
        </authorList>
    </citation>
    <scope>CHARACTERIZATION</scope>
</reference>
<reference key="5">
    <citation type="journal article" date="1998" name="J. Biotechnol.">
        <title>Protein secretion and possible roles for multiple signal peptidases for precursor processing in bacilli.</title>
        <authorList>
            <person name="Bron S."/>
            <person name="Bolhuis A."/>
            <person name="Tjalsma H."/>
            <person name="Holsappel S."/>
            <person name="Venema G."/>
            <person name="van Dijl J.M."/>
        </authorList>
    </citation>
    <scope>REVIEW</scope>
</reference>
<evidence type="ECO:0000250" key="1"/>
<evidence type="ECO:0000255" key="2"/>
<evidence type="ECO:0000305" key="3"/>
<dbReference type="EC" id="3.4.21.89"/>
<dbReference type="EMBL" id="D38161">
    <property type="protein sequence ID" value="BAA07353.1"/>
    <property type="molecule type" value="Genomic_DNA"/>
</dbReference>
<dbReference type="EMBL" id="D50453">
    <property type="protein sequence ID" value="BAA09032.1"/>
    <property type="molecule type" value="Genomic_DNA"/>
</dbReference>
<dbReference type="EMBL" id="AL009126">
    <property type="protein sequence ID" value="CAB12209.1"/>
    <property type="molecule type" value="Genomic_DNA"/>
</dbReference>
<dbReference type="PIR" id="I39890">
    <property type="entry name" value="I39890"/>
</dbReference>
<dbReference type="RefSeq" id="NP_388283.1">
    <property type="nucleotide sequence ID" value="NC_000964.3"/>
</dbReference>
<dbReference type="RefSeq" id="WP_003234434.1">
    <property type="nucleotide sequence ID" value="NZ_OZ025638.1"/>
</dbReference>
<dbReference type="SMR" id="P42959"/>
<dbReference type="FunCoup" id="P42959">
    <property type="interactions" value="603"/>
</dbReference>
<dbReference type="STRING" id="224308.BSU04010"/>
<dbReference type="MEROPS" id="S26.005"/>
<dbReference type="PaxDb" id="224308-BSU04010"/>
<dbReference type="DNASU" id="939966"/>
<dbReference type="EnsemblBacteria" id="CAB12209">
    <property type="protein sequence ID" value="CAB12209"/>
    <property type="gene ID" value="BSU_04010"/>
</dbReference>
<dbReference type="GeneID" id="939966"/>
<dbReference type="KEGG" id="bsu:BSU04010"/>
<dbReference type="PATRIC" id="fig|224308.179.peg.426"/>
<dbReference type="eggNOG" id="COG0681">
    <property type="taxonomic scope" value="Bacteria"/>
</dbReference>
<dbReference type="InParanoid" id="P42959"/>
<dbReference type="OrthoDB" id="9802919at2"/>
<dbReference type="PhylomeDB" id="P42959"/>
<dbReference type="BioCyc" id="BSUB:BSU04010-MONOMER"/>
<dbReference type="Proteomes" id="UP000001570">
    <property type="component" value="Chromosome"/>
</dbReference>
<dbReference type="GO" id="GO:0005886">
    <property type="term" value="C:plasma membrane"/>
    <property type="evidence" value="ECO:0007669"/>
    <property type="project" value="UniProtKB-SubCell"/>
</dbReference>
<dbReference type="GO" id="GO:0004252">
    <property type="term" value="F:serine-type endopeptidase activity"/>
    <property type="evidence" value="ECO:0000318"/>
    <property type="project" value="GO_Central"/>
</dbReference>
<dbReference type="GO" id="GO:0006465">
    <property type="term" value="P:signal peptide processing"/>
    <property type="evidence" value="ECO:0000318"/>
    <property type="project" value="GO_Central"/>
</dbReference>
<dbReference type="CDD" id="cd06530">
    <property type="entry name" value="S26_SPase_I"/>
    <property type="match status" value="1"/>
</dbReference>
<dbReference type="FunFam" id="2.10.109.10:FF:000008">
    <property type="entry name" value="Signal peptidase I"/>
    <property type="match status" value="1"/>
</dbReference>
<dbReference type="Gene3D" id="2.10.109.10">
    <property type="entry name" value="Umud Fragment, subunit A"/>
    <property type="match status" value="1"/>
</dbReference>
<dbReference type="InterPro" id="IPR036286">
    <property type="entry name" value="LexA/Signal_pep-like_sf"/>
</dbReference>
<dbReference type="InterPro" id="IPR000223">
    <property type="entry name" value="Pept_S26A_signal_pept_1"/>
</dbReference>
<dbReference type="InterPro" id="IPR019758">
    <property type="entry name" value="Pept_S26A_signal_pept_1_CS"/>
</dbReference>
<dbReference type="InterPro" id="IPR019757">
    <property type="entry name" value="Pept_S26A_signal_pept_1_Lys-AS"/>
</dbReference>
<dbReference type="InterPro" id="IPR019756">
    <property type="entry name" value="Pept_S26A_signal_pept_1_Ser-AS"/>
</dbReference>
<dbReference type="InterPro" id="IPR019533">
    <property type="entry name" value="Peptidase_S26"/>
</dbReference>
<dbReference type="NCBIfam" id="TIGR02227">
    <property type="entry name" value="sigpep_I_bact"/>
    <property type="match status" value="1"/>
</dbReference>
<dbReference type="PANTHER" id="PTHR43390:SF1">
    <property type="entry name" value="CHLOROPLAST PROCESSING PEPTIDASE"/>
    <property type="match status" value="1"/>
</dbReference>
<dbReference type="PANTHER" id="PTHR43390">
    <property type="entry name" value="SIGNAL PEPTIDASE I"/>
    <property type="match status" value="1"/>
</dbReference>
<dbReference type="Pfam" id="PF10502">
    <property type="entry name" value="Peptidase_S26"/>
    <property type="match status" value="1"/>
</dbReference>
<dbReference type="PRINTS" id="PR00727">
    <property type="entry name" value="LEADERPTASE"/>
</dbReference>
<dbReference type="SUPFAM" id="SSF51306">
    <property type="entry name" value="LexA/Signal peptidase"/>
    <property type="match status" value="1"/>
</dbReference>
<dbReference type="PROSITE" id="PS00501">
    <property type="entry name" value="SPASE_I_1"/>
    <property type="match status" value="1"/>
</dbReference>
<dbReference type="PROSITE" id="PS00760">
    <property type="entry name" value="SPASE_I_2"/>
    <property type="match status" value="1"/>
</dbReference>
<dbReference type="PROSITE" id="PS00761">
    <property type="entry name" value="SPASE_I_3"/>
    <property type="match status" value="1"/>
</dbReference>
<protein>
    <recommendedName>
        <fullName>Signal peptidase I U</fullName>
        <shortName>SPase I</shortName>
        <ecNumber>3.4.21.89</ecNumber>
    </recommendedName>
    <alternativeName>
        <fullName>Leader peptidase I</fullName>
    </alternativeName>
</protein>
<organism>
    <name type="scientific">Bacillus subtilis (strain 168)</name>
    <dbReference type="NCBI Taxonomy" id="224308"/>
    <lineage>
        <taxon>Bacteria</taxon>
        <taxon>Bacillati</taxon>
        <taxon>Bacillota</taxon>
        <taxon>Bacilli</taxon>
        <taxon>Bacillales</taxon>
        <taxon>Bacillaceae</taxon>
        <taxon>Bacillus</taxon>
    </lineage>
</organism>